<evidence type="ECO:0000255" key="1">
    <source>
        <dbReference type="HAMAP-Rule" id="MF_00082"/>
    </source>
</evidence>
<comment type="function">
    <text evidence="1">Catalyzes the ATP-dependent phosphorylation of N-acetyl-L-glutamate.</text>
</comment>
<comment type="catalytic activity">
    <reaction evidence="1">
        <text>N-acetyl-L-glutamate + ATP = N-acetyl-L-glutamyl 5-phosphate + ADP</text>
        <dbReference type="Rhea" id="RHEA:14629"/>
        <dbReference type="ChEBI" id="CHEBI:30616"/>
        <dbReference type="ChEBI" id="CHEBI:44337"/>
        <dbReference type="ChEBI" id="CHEBI:57936"/>
        <dbReference type="ChEBI" id="CHEBI:456216"/>
        <dbReference type="EC" id="2.7.2.8"/>
    </reaction>
</comment>
<comment type="pathway">
    <text evidence="1">Amino-acid biosynthesis; L-arginine biosynthesis; N(2)-acetyl-L-ornithine from L-glutamate: step 2/4.</text>
</comment>
<comment type="subcellular location">
    <subcellularLocation>
        <location evidence="1">Cytoplasm</location>
    </subcellularLocation>
</comment>
<comment type="similarity">
    <text evidence="1">Belongs to the acetylglutamate kinase family. ArgB subfamily.</text>
</comment>
<accession>A5D506</accession>
<gene>
    <name evidence="1" type="primary">argB</name>
    <name type="ordered locus">PTH_0503</name>
</gene>
<keyword id="KW-0028">Amino-acid biosynthesis</keyword>
<keyword id="KW-0055">Arginine biosynthesis</keyword>
<keyword id="KW-0067">ATP-binding</keyword>
<keyword id="KW-0963">Cytoplasm</keyword>
<keyword id="KW-0418">Kinase</keyword>
<keyword id="KW-0547">Nucleotide-binding</keyword>
<keyword id="KW-1185">Reference proteome</keyword>
<keyword id="KW-0808">Transferase</keyword>
<dbReference type="EC" id="2.7.2.8" evidence="1"/>
<dbReference type="EMBL" id="AP009389">
    <property type="protein sequence ID" value="BAF58684.1"/>
    <property type="molecule type" value="Genomic_DNA"/>
</dbReference>
<dbReference type="SMR" id="A5D506"/>
<dbReference type="STRING" id="370438.PTH_0503"/>
<dbReference type="KEGG" id="pth:PTH_0503"/>
<dbReference type="eggNOG" id="COG0548">
    <property type="taxonomic scope" value="Bacteria"/>
</dbReference>
<dbReference type="HOGENOM" id="CLU_053680_0_0_9"/>
<dbReference type="UniPathway" id="UPA00068">
    <property type="reaction ID" value="UER00107"/>
</dbReference>
<dbReference type="Proteomes" id="UP000006556">
    <property type="component" value="Chromosome"/>
</dbReference>
<dbReference type="GO" id="GO:0005737">
    <property type="term" value="C:cytoplasm"/>
    <property type="evidence" value="ECO:0007669"/>
    <property type="project" value="UniProtKB-SubCell"/>
</dbReference>
<dbReference type="GO" id="GO:0003991">
    <property type="term" value="F:acetylglutamate kinase activity"/>
    <property type="evidence" value="ECO:0007669"/>
    <property type="project" value="UniProtKB-UniRule"/>
</dbReference>
<dbReference type="GO" id="GO:0005524">
    <property type="term" value="F:ATP binding"/>
    <property type="evidence" value="ECO:0007669"/>
    <property type="project" value="UniProtKB-UniRule"/>
</dbReference>
<dbReference type="GO" id="GO:0042450">
    <property type="term" value="P:arginine biosynthetic process via ornithine"/>
    <property type="evidence" value="ECO:0007669"/>
    <property type="project" value="UniProtKB-UniRule"/>
</dbReference>
<dbReference type="GO" id="GO:0006526">
    <property type="term" value="P:L-arginine biosynthetic process"/>
    <property type="evidence" value="ECO:0007669"/>
    <property type="project" value="UniProtKB-UniPathway"/>
</dbReference>
<dbReference type="CDD" id="cd04250">
    <property type="entry name" value="AAK_NAGK-C"/>
    <property type="match status" value="1"/>
</dbReference>
<dbReference type="FunFam" id="3.40.1160.10:FF:000004">
    <property type="entry name" value="Acetylglutamate kinase"/>
    <property type="match status" value="1"/>
</dbReference>
<dbReference type="Gene3D" id="3.40.1160.10">
    <property type="entry name" value="Acetylglutamate kinase-like"/>
    <property type="match status" value="1"/>
</dbReference>
<dbReference type="HAMAP" id="MF_00082">
    <property type="entry name" value="ArgB"/>
    <property type="match status" value="1"/>
</dbReference>
<dbReference type="InterPro" id="IPR036393">
    <property type="entry name" value="AceGlu_kinase-like_sf"/>
</dbReference>
<dbReference type="InterPro" id="IPR004662">
    <property type="entry name" value="AcgluKinase_fam"/>
</dbReference>
<dbReference type="InterPro" id="IPR037528">
    <property type="entry name" value="ArgB"/>
</dbReference>
<dbReference type="InterPro" id="IPR001048">
    <property type="entry name" value="Asp/Glu/Uridylate_kinase"/>
</dbReference>
<dbReference type="InterPro" id="IPR001057">
    <property type="entry name" value="Glu/AcGlu_kinase"/>
</dbReference>
<dbReference type="InterPro" id="IPR041727">
    <property type="entry name" value="NAGK-C"/>
</dbReference>
<dbReference type="NCBIfam" id="TIGR00761">
    <property type="entry name" value="argB"/>
    <property type="match status" value="1"/>
</dbReference>
<dbReference type="PANTHER" id="PTHR23342">
    <property type="entry name" value="N-ACETYLGLUTAMATE SYNTHASE"/>
    <property type="match status" value="1"/>
</dbReference>
<dbReference type="PANTHER" id="PTHR23342:SF0">
    <property type="entry name" value="N-ACETYLGLUTAMATE SYNTHASE, MITOCHONDRIAL"/>
    <property type="match status" value="1"/>
</dbReference>
<dbReference type="Pfam" id="PF00696">
    <property type="entry name" value="AA_kinase"/>
    <property type="match status" value="1"/>
</dbReference>
<dbReference type="PIRSF" id="PIRSF000728">
    <property type="entry name" value="NAGK"/>
    <property type="match status" value="1"/>
</dbReference>
<dbReference type="PRINTS" id="PR00474">
    <property type="entry name" value="GLU5KINASE"/>
</dbReference>
<dbReference type="SUPFAM" id="SSF53633">
    <property type="entry name" value="Carbamate kinase-like"/>
    <property type="match status" value="1"/>
</dbReference>
<proteinExistence type="inferred from homology"/>
<organism>
    <name type="scientific">Pelotomaculum thermopropionicum (strain DSM 13744 / JCM 10971 / SI)</name>
    <dbReference type="NCBI Taxonomy" id="370438"/>
    <lineage>
        <taxon>Bacteria</taxon>
        <taxon>Bacillati</taxon>
        <taxon>Bacillota</taxon>
        <taxon>Clostridia</taxon>
        <taxon>Eubacteriales</taxon>
        <taxon>Desulfotomaculaceae</taxon>
        <taxon>Pelotomaculum</taxon>
    </lineage>
</organism>
<name>ARGB_PELTS</name>
<reference key="1">
    <citation type="journal article" date="2008" name="Genome Res.">
        <title>The genome of Pelotomaculum thermopropionicum reveals niche-associated evolution in anaerobic microbiota.</title>
        <authorList>
            <person name="Kosaka T."/>
            <person name="Kato S."/>
            <person name="Shimoyama T."/>
            <person name="Ishii S."/>
            <person name="Abe T."/>
            <person name="Watanabe K."/>
        </authorList>
    </citation>
    <scope>NUCLEOTIDE SEQUENCE [LARGE SCALE GENOMIC DNA]</scope>
    <source>
        <strain>DSM 13744 / JCM 10971 / SI</strain>
    </source>
</reference>
<sequence length="295" mass="31420">MSTPWEKAAVLVEALPYIKKFYGKTIVIKYGGHAMLDDSLKEAVLTDAVLMKYVGMHPVIVHGGGPEITEMLKRVGKDSRFVGGLRVTDGETMEIVEMVLVGKINKGIVSRINRIGGLAVGLSGKDAGLFQAVKKYRKVRTPEGREETADIGFVGEISRVNPQIVSTVIAEGYIPVIAPVAVGPEGESYNINADYAAGRLAAALGADKLIILTDVEGIMADRSDPGSLISVLRASEVPSLIERGVIDGGMIPKVECCLDALAGGVRTTHILDGRVPHSILLEIFTDKGIGTMVEK</sequence>
<feature type="chain" id="PRO_1000075316" description="Acetylglutamate kinase">
    <location>
        <begin position="1"/>
        <end position="295"/>
    </location>
</feature>
<feature type="binding site" evidence="1">
    <location>
        <begin position="64"/>
        <end position="65"/>
    </location>
    <ligand>
        <name>substrate</name>
    </ligand>
</feature>
<feature type="binding site" evidence="1">
    <location>
        <position position="86"/>
    </location>
    <ligand>
        <name>substrate</name>
    </ligand>
</feature>
<feature type="binding site" evidence="1">
    <location>
        <position position="190"/>
    </location>
    <ligand>
        <name>substrate</name>
    </ligand>
</feature>
<feature type="site" description="Transition state stabilizer" evidence="1">
    <location>
        <position position="29"/>
    </location>
</feature>
<feature type="site" description="Transition state stabilizer" evidence="1">
    <location>
        <position position="253"/>
    </location>
</feature>
<protein>
    <recommendedName>
        <fullName evidence="1">Acetylglutamate kinase</fullName>
        <ecNumber evidence="1">2.7.2.8</ecNumber>
    </recommendedName>
    <alternativeName>
        <fullName evidence="1">N-acetyl-L-glutamate 5-phosphotransferase</fullName>
    </alternativeName>
    <alternativeName>
        <fullName evidence="1">NAG kinase</fullName>
        <shortName evidence="1">NAGK</shortName>
    </alternativeName>
</protein>